<protein>
    <recommendedName>
        <fullName evidence="3">Large ribosomal subunit protein uL3c</fullName>
    </recommendedName>
    <alternativeName>
        <fullName>50S ribosomal protein L3, chloroplastic</fullName>
    </alternativeName>
</protein>
<sequence length="204" mass="22009">MKIGLLGTKLGMTQIFDDNGSAIPVTILKVGPCYVTNLKSDTKDNYNAIQIGYQQVDAKKLTKPQLGHLQVNNLPPLKHLKEYKVDATHTFTIAQQLDVSIFELGQIVSVSGVSIGKGFAGTVKRHNFTRGPMTHGSKNHREPGSIGQGSTPAKVHKGKKMAGRLGGHQVTTKNLTVVHLDKDNNVLVLKGCVPGKRGNILSIK</sequence>
<feature type="chain" id="PRO_0000077202" description="Large ribosomal subunit protein uL3c">
    <location>
        <begin position="1"/>
        <end position="204"/>
    </location>
</feature>
<feature type="region of interest" description="Disordered" evidence="2">
    <location>
        <begin position="126"/>
        <end position="155"/>
    </location>
</feature>
<geneLocation type="chloroplast"/>
<comment type="function">
    <text evidence="1">One of the primary rRNA binding proteins, it binds directly near the 3'-end of the 23S rRNA, where it nucleates assembly of the 50S subunit.</text>
</comment>
<comment type="subunit">
    <text>Part of the 50S ribosomal subunit.</text>
</comment>
<comment type="subcellular location">
    <subcellularLocation>
        <location>Plastid</location>
        <location>Chloroplast</location>
    </subcellularLocation>
</comment>
<comment type="similarity">
    <text evidence="3">Belongs to the universal ribosomal protein uL3 family.</text>
</comment>
<keyword id="KW-0150">Chloroplast</keyword>
<keyword id="KW-0934">Plastid</keyword>
<keyword id="KW-0687">Ribonucleoprotein</keyword>
<keyword id="KW-0689">Ribosomal protein</keyword>
<keyword id="KW-0694">RNA-binding</keyword>
<keyword id="KW-0699">rRNA-binding</keyword>
<evidence type="ECO:0000250" key="1"/>
<evidence type="ECO:0000256" key="2">
    <source>
        <dbReference type="SAM" id="MobiDB-lite"/>
    </source>
</evidence>
<evidence type="ECO:0000305" key="3"/>
<gene>
    <name type="primary">rpl3</name>
</gene>
<name>RK3_GUITH</name>
<dbReference type="EMBL" id="AF041468">
    <property type="protein sequence ID" value="AAC35703.1"/>
    <property type="molecule type" value="Genomic_DNA"/>
</dbReference>
<dbReference type="RefSeq" id="NP_050769.1">
    <property type="nucleotide sequence ID" value="NC_000926.1"/>
</dbReference>
<dbReference type="SMR" id="O46894"/>
<dbReference type="GeneID" id="857077"/>
<dbReference type="HOGENOM" id="CLU_044142_4_1_1"/>
<dbReference type="OMA" id="QCIYNYK"/>
<dbReference type="GO" id="GO:0009507">
    <property type="term" value="C:chloroplast"/>
    <property type="evidence" value="ECO:0007669"/>
    <property type="project" value="UniProtKB-SubCell"/>
</dbReference>
<dbReference type="GO" id="GO:0022625">
    <property type="term" value="C:cytosolic large ribosomal subunit"/>
    <property type="evidence" value="ECO:0007669"/>
    <property type="project" value="TreeGrafter"/>
</dbReference>
<dbReference type="GO" id="GO:0019843">
    <property type="term" value="F:rRNA binding"/>
    <property type="evidence" value="ECO:0007669"/>
    <property type="project" value="UniProtKB-UniRule"/>
</dbReference>
<dbReference type="GO" id="GO:0003735">
    <property type="term" value="F:structural constituent of ribosome"/>
    <property type="evidence" value="ECO:0007669"/>
    <property type="project" value="InterPro"/>
</dbReference>
<dbReference type="GO" id="GO:0006412">
    <property type="term" value="P:translation"/>
    <property type="evidence" value="ECO:0007669"/>
    <property type="project" value="UniProtKB-UniRule"/>
</dbReference>
<dbReference type="FunFam" id="3.30.160.810:FF:000001">
    <property type="entry name" value="50S ribosomal protein L3"/>
    <property type="match status" value="1"/>
</dbReference>
<dbReference type="FunFam" id="2.40.30.10:FF:000065">
    <property type="entry name" value="50S ribosomal protein L3, chloroplastic"/>
    <property type="match status" value="1"/>
</dbReference>
<dbReference type="Gene3D" id="3.30.160.810">
    <property type="match status" value="1"/>
</dbReference>
<dbReference type="Gene3D" id="2.40.30.10">
    <property type="entry name" value="Translation factors"/>
    <property type="match status" value="1"/>
</dbReference>
<dbReference type="HAMAP" id="MF_01325_B">
    <property type="entry name" value="Ribosomal_uL3_B"/>
    <property type="match status" value="1"/>
</dbReference>
<dbReference type="InterPro" id="IPR000597">
    <property type="entry name" value="Ribosomal_uL3"/>
</dbReference>
<dbReference type="InterPro" id="IPR019927">
    <property type="entry name" value="Ribosomal_uL3_bac/org-type"/>
</dbReference>
<dbReference type="InterPro" id="IPR009000">
    <property type="entry name" value="Transl_B-barrel_sf"/>
</dbReference>
<dbReference type="NCBIfam" id="TIGR03625">
    <property type="entry name" value="L3_bact"/>
    <property type="match status" value="1"/>
</dbReference>
<dbReference type="PANTHER" id="PTHR11229">
    <property type="entry name" value="50S RIBOSOMAL PROTEIN L3"/>
    <property type="match status" value="1"/>
</dbReference>
<dbReference type="PANTHER" id="PTHR11229:SF16">
    <property type="entry name" value="LARGE RIBOSOMAL SUBUNIT PROTEIN UL3C"/>
    <property type="match status" value="1"/>
</dbReference>
<dbReference type="Pfam" id="PF00297">
    <property type="entry name" value="Ribosomal_L3"/>
    <property type="match status" value="1"/>
</dbReference>
<dbReference type="SUPFAM" id="SSF50447">
    <property type="entry name" value="Translation proteins"/>
    <property type="match status" value="1"/>
</dbReference>
<reference key="1">
    <citation type="journal article" date="1997" name="Biochem. Mol. Biol. Int.">
        <title>The large ribosomal protein gene cluster of a cryptomonad plastid: gene organization, sequence and evolutionary implications.</title>
        <authorList>
            <person name="Wang S.L."/>
            <person name="Liu X.-Q."/>
            <person name="Douglas S.E."/>
        </authorList>
    </citation>
    <scope>NUCLEOTIDE SEQUENCE [GENOMIC DNA]</scope>
</reference>
<reference key="2">
    <citation type="journal article" date="1999" name="J. Mol. Evol.">
        <title>The plastid genome of the cryptophyte alga, Guillardia theta: complete sequence and conserved synteny groups confirm its common ancestry with red algae.</title>
        <authorList>
            <person name="Douglas S.E."/>
            <person name="Penny S.L."/>
        </authorList>
    </citation>
    <scope>NUCLEOTIDE SEQUENCE [LARGE SCALE GENOMIC DNA]</scope>
</reference>
<accession>O46894</accession>
<organism>
    <name type="scientific">Guillardia theta</name>
    <name type="common">Cryptophyte</name>
    <name type="synonym">Cryptomonas phi</name>
    <dbReference type="NCBI Taxonomy" id="55529"/>
    <lineage>
        <taxon>Eukaryota</taxon>
        <taxon>Cryptophyceae</taxon>
        <taxon>Pyrenomonadales</taxon>
        <taxon>Geminigeraceae</taxon>
        <taxon>Guillardia</taxon>
    </lineage>
</organism>
<proteinExistence type="inferred from homology"/>